<comment type="function">
    <text evidence="1">Is able to cleave peptidoglycan.</text>
</comment>
<comment type="subcellular location">
    <subcellularLocation>
        <location evidence="1">Secreted</location>
    </subcellularLocation>
</comment>
<comment type="similarity">
    <text evidence="4">Belongs to the transglycosylase family. IsaA subfamily.</text>
</comment>
<keyword id="KW-0326">Glycosidase</keyword>
<keyword id="KW-0378">Hydrolase</keyword>
<keyword id="KW-0964">Secreted</keyword>
<keyword id="KW-0732">Signal</keyword>
<feature type="signal peptide" evidence="2">
    <location>
        <begin position="1"/>
        <end position="25"/>
    </location>
</feature>
<feature type="chain" id="PRO_0000329003" description="Probable transglycosylase IsaA">
    <location>
        <begin position="26"/>
        <end position="243"/>
    </location>
</feature>
<feature type="region of interest" description="Disordered" evidence="3">
    <location>
        <begin position="99"/>
        <end position="143"/>
    </location>
</feature>
<feature type="compositionally biased region" description="Low complexity" evidence="3">
    <location>
        <begin position="99"/>
        <end position="116"/>
    </location>
</feature>
<feature type="compositionally biased region" description="Polar residues" evidence="3">
    <location>
        <begin position="117"/>
        <end position="127"/>
    </location>
</feature>
<proteinExistence type="evidence at protein level"/>
<name>ISAA_STAXY</name>
<dbReference type="EC" id="3.2.-.-"/>
<dbReference type="EMBL" id="DQ498895">
    <property type="protein sequence ID" value="ABF47259.1"/>
    <property type="molecule type" value="Genomic_DNA"/>
</dbReference>
<dbReference type="RefSeq" id="WP_047171833.1">
    <property type="nucleotide sequence ID" value="NZ_CP066726.1"/>
</dbReference>
<dbReference type="STRING" id="1288.AWC37_10375"/>
<dbReference type="KEGG" id="sxo:SXYL_00323"/>
<dbReference type="eggNOG" id="COG1388">
    <property type="taxonomic scope" value="Bacteria"/>
</dbReference>
<dbReference type="GO" id="GO:0005576">
    <property type="term" value="C:extracellular region"/>
    <property type="evidence" value="ECO:0007669"/>
    <property type="project" value="UniProtKB-SubCell"/>
</dbReference>
<dbReference type="GO" id="GO:0016798">
    <property type="term" value="F:hydrolase activity, acting on glycosyl bonds"/>
    <property type="evidence" value="ECO:0007669"/>
    <property type="project" value="UniProtKB-KW"/>
</dbReference>
<dbReference type="InterPro" id="IPR023346">
    <property type="entry name" value="Lysozyme-like_dom_sf"/>
</dbReference>
<dbReference type="SUPFAM" id="SSF53955">
    <property type="entry name" value="Lysozyme-like"/>
    <property type="match status" value="1"/>
</dbReference>
<protein>
    <recommendedName>
        <fullName>Probable transglycosylase IsaA</fullName>
        <ecNumber>3.2.-.-</ecNumber>
    </recommendedName>
    <alternativeName>
        <fullName>Immunodominant staphylococcal antigen A</fullName>
    </alternativeName>
</protein>
<organism>
    <name type="scientific">Staphylococcus xylosus</name>
    <dbReference type="NCBI Taxonomy" id="1288"/>
    <lineage>
        <taxon>Bacteria</taxon>
        <taxon>Bacillati</taxon>
        <taxon>Bacillota</taxon>
        <taxon>Bacilli</taxon>
        <taxon>Bacillales</taxon>
        <taxon>Staphylococcaceae</taxon>
        <taxon>Staphylococcus</taxon>
    </lineage>
</organism>
<reference key="1">
    <citation type="submission" date="2006-04" db="EMBL/GenBank/DDBJ databases">
        <authorList>
            <person name="Planchon S."/>
            <person name="Talon R."/>
            <person name="Leroy S."/>
        </authorList>
    </citation>
    <scope>NUCLEOTIDE SEQUENCE [GENOMIC DNA]</scope>
    <source>
        <strain>DSM 20267 / Isolate C2A</strain>
    </source>
</reference>
<reference key="2">
    <citation type="journal article" date="2007" name="J. Proteome Res.">
        <title>Proteomic analysis of cell envelope from Staphylococcus xylosus C2a, a coagulase-negative staphylococcus.</title>
        <authorList>
            <person name="Planchon S."/>
            <person name="Chambon C."/>
            <person name="Desvaux M."/>
            <person name="Chafsey I."/>
            <person name="Leroy S."/>
            <person name="Talon R."/>
            <person name="Hebraud M."/>
        </authorList>
    </citation>
    <scope>IDENTIFICATION BY MASS SPECTROMETRY</scope>
    <source>
        <strain>DSM 20267 / Isolate C2A</strain>
    </source>
</reference>
<evidence type="ECO:0000250" key="1"/>
<evidence type="ECO:0000255" key="2"/>
<evidence type="ECO:0000256" key="3">
    <source>
        <dbReference type="SAM" id="MobiDB-lite"/>
    </source>
</evidence>
<evidence type="ECO:0000305" key="4"/>
<sequence>MKKTILASSLAVALGVTGYATTADHNQAHASEENIDKAHLADLAQNNPEELNQKPLHAGAYNYNFVLGGNEYTFTSNGQSWSWNYTAAGAQSATSNSVQDVTTQATTNTNETSASEVSAQKQSSNTPVAAVEAPKASSNTQTSAATRTYKVAQTSAASTGGSVKAQFLAAGGTEAMWNSIVMPESSGNPNAVNPAGYRGLGQTKESWGSGSVASQTKGMINYGESRYGSMEAAMTFRASHGWW</sequence>
<accession>A7IY64</accession>
<gene>
    <name type="primary">isaA</name>
</gene>